<feature type="chain" id="PRO_0000178321" description="Small ribosomal subunit protein bS21">
    <location>
        <begin position="1"/>
        <end position="87"/>
    </location>
</feature>
<feature type="region of interest" description="Disordered" evidence="2">
    <location>
        <begin position="47"/>
        <end position="87"/>
    </location>
</feature>
<feature type="compositionally biased region" description="Basic and acidic residues" evidence="2">
    <location>
        <begin position="47"/>
        <end position="63"/>
    </location>
</feature>
<feature type="compositionally biased region" description="Basic residues" evidence="2">
    <location>
        <begin position="64"/>
        <end position="73"/>
    </location>
</feature>
<protein>
    <recommendedName>
        <fullName evidence="1">Small ribosomal subunit protein bS21</fullName>
    </recommendedName>
    <alternativeName>
        <fullName evidence="3">30S ribosomal protein S21</fullName>
    </alternativeName>
</protein>
<gene>
    <name evidence="1" type="primary">rpsU</name>
    <name type="ordered locus">CC_3297</name>
</gene>
<reference key="1">
    <citation type="journal article" date="2001" name="Proc. Natl. Acad. Sci. U.S.A.">
        <title>Complete genome sequence of Caulobacter crescentus.</title>
        <authorList>
            <person name="Nierman W.C."/>
            <person name="Feldblyum T.V."/>
            <person name="Laub M.T."/>
            <person name="Paulsen I.T."/>
            <person name="Nelson K.E."/>
            <person name="Eisen J.A."/>
            <person name="Heidelberg J.F."/>
            <person name="Alley M.R.K."/>
            <person name="Ohta N."/>
            <person name="Maddock J.R."/>
            <person name="Potocka I."/>
            <person name="Nelson W.C."/>
            <person name="Newton A."/>
            <person name="Stephens C."/>
            <person name="Phadke N.D."/>
            <person name="Ely B."/>
            <person name="DeBoy R.T."/>
            <person name="Dodson R.J."/>
            <person name="Durkin A.S."/>
            <person name="Gwinn M.L."/>
            <person name="Haft D.H."/>
            <person name="Kolonay J.F."/>
            <person name="Smit J."/>
            <person name="Craven M.B."/>
            <person name="Khouri H.M."/>
            <person name="Shetty J."/>
            <person name="Berry K.J."/>
            <person name="Utterback T.R."/>
            <person name="Tran K."/>
            <person name="Wolf A.M."/>
            <person name="Vamathevan J.J."/>
            <person name="Ermolaeva M.D."/>
            <person name="White O."/>
            <person name="Salzberg S.L."/>
            <person name="Venter J.C."/>
            <person name="Shapiro L."/>
            <person name="Fraser C.M."/>
        </authorList>
    </citation>
    <scope>NUCLEOTIDE SEQUENCE [LARGE SCALE GENOMIC DNA]</scope>
    <source>
        <strain>ATCC 19089 / CIP 103742 / CB 15</strain>
    </source>
</reference>
<accession>Q9A3A7</accession>
<keyword id="KW-1185">Reference proteome</keyword>
<keyword id="KW-0687">Ribonucleoprotein</keyword>
<keyword id="KW-0689">Ribosomal protein</keyword>
<sequence>MVGLSNGEIPLVQIFVRDNNVDQALKALKKKMQREGSFREMKRHVHYEKPSEKRARQKAEAVRRARKLARKRAQREGLLPMPKKPGR</sequence>
<dbReference type="EMBL" id="AE005673">
    <property type="protein sequence ID" value="AAK25259.1"/>
    <property type="molecule type" value="Genomic_DNA"/>
</dbReference>
<dbReference type="PIR" id="G87657">
    <property type="entry name" value="G87657"/>
</dbReference>
<dbReference type="RefSeq" id="NP_422091.1">
    <property type="nucleotide sequence ID" value="NC_002696.2"/>
</dbReference>
<dbReference type="SMR" id="Q9A3A7"/>
<dbReference type="STRING" id="190650.CC_3297"/>
<dbReference type="EnsemblBacteria" id="AAK25259">
    <property type="protein sequence ID" value="AAK25259"/>
    <property type="gene ID" value="CC_3297"/>
</dbReference>
<dbReference type="KEGG" id="ccr:CC_3297"/>
<dbReference type="PATRIC" id="fig|190650.5.peg.3303"/>
<dbReference type="eggNOG" id="COG0828">
    <property type="taxonomic scope" value="Bacteria"/>
</dbReference>
<dbReference type="HOGENOM" id="CLU_159258_0_1_5"/>
<dbReference type="BioCyc" id="CAULO:CC3297-MONOMER"/>
<dbReference type="Proteomes" id="UP000001816">
    <property type="component" value="Chromosome"/>
</dbReference>
<dbReference type="GO" id="GO:1990904">
    <property type="term" value="C:ribonucleoprotein complex"/>
    <property type="evidence" value="ECO:0007669"/>
    <property type="project" value="UniProtKB-KW"/>
</dbReference>
<dbReference type="GO" id="GO:0005840">
    <property type="term" value="C:ribosome"/>
    <property type="evidence" value="ECO:0007669"/>
    <property type="project" value="UniProtKB-KW"/>
</dbReference>
<dbReference type="GO" id="GO:0003735">
    <property type="term" value="F:structural constituent of ribosome"/>
    <property type="evidence" value="ECO:0007669"/>
    <property type="project" value="InterPro"/>
</dbReference>
<dbReference type="GO" id="GO:0006412">
    <property type="term" value="P:translation"/>
    <property type="evidence" value="ECO:0007669"/>
    <property type="project" value="UniProtKB-UniRule"/>
</dbReference>
<dbReference type="Gene3D" id="1.20.5.1150">
    <property type="entry name" value="Ribosomal protein S8"/>
    <property type="match status" value="1"/>
</dbReference>
<dbReference type="HAMAP" id="MF_00358">
    <property type="entry name" value="Ribosomal_bS21"/>
    <property type="match status" value="1"/>
</dbReference>
<dbReference type="InterPro" id="IPR001911">
    <property type="entry name" value="Ribosomal_bS21"/>
</dbReference>
<dbReference type="InterPro" id="IPR018278">
    <property type="entry name" value="Ribosomal_bS21_CS"/>
</dbReference>
<dbReference type="InterPro" id="IPR038380">
    <property type="entry name" value="Ribosomal_bS21_sf"/>
</dbReference>
<dbReference type="NCBIfam" id="TIGR00030">
    <property type="entry name" value="S21p"/>
    <property type="match status" value="1"/>
</dbReference>
<dbReference type="PANTHER" id="PTHR21109">
    <property type="entry name" value="MITOCHONDRIAL 28S RIBOSOMAL PROTEIN S21"/>
    <property type="match status" value="1"/>
</dbReference>
<dbReference type="PANTHER" id="PTHR21109:SF0">
    <property type="entry name" value="SMALL RIBOSOMAL SUBUNIT PROTEIN BS21M"/>
    <property type="match status" value="1"/>
</dbReference>
<dbReference type="Pfam" id="PF01165">
    <property type="entry name" value="Ribosomal_S21"/>
    <property type="match status" value="1"/>
</dbReference>
<dbReference type="PROSITE" id="PS01181">
    <property type="entry name" value="RIBOSOMAL_S21"/>
    <property type="match status" value="1"/>
</dbReference>
<proteinExistence type="inferred from homology"/>
<comment type="similarity">
    <text evidence="1">Belongs to the bacterial ribosomal protein bS21 family.</text>
</comment>
<name>RS21_CAUVC</name>
<evidence type="ECO:0000255" key="1">
    <source>
        <dbReference type="HAMAP-Rule" id="MF_00358"/>
    </source>
</evidence>
<evidence type="ECO:0000256" key="2">
    <source>
        <dbReference type="SAM" id="MobiDB-lite"/>
    </source>
</evidence>
<evidence type="ECO:0000305" key="3"/>
<organism>
    <name type="scientific">Caulobacter vibrioides (strain ATCC 19089 / CIP 103742 / CB 15)</name>
    <name type="common">Caulobacter crescentus</name>
    <dbReference type="NCBI Taxonomy" id="190650"/>
    <lineage>
        <taxon>Bacteria</taxon>
        <taxon>Pseudomonadati</taxon>
        <taxon>Pseudomonadota</taxon>
        <taxon>Alphaproteobacteria</taxon>
        <taxon>Caulobacterales</taxon>
        <taxon>Caulobacteraceae</taxon>
        <taxon>Caulobacter</taxon>
    </lineage>
</organism>